<sequence>MARLQEFYKEKVVGDLTAKFAYKSVMEVPRILKITLNMGLSEAVADKKIIEHAVGDLTKIAGQKPVVTKARKAIAGFKIREGYPIGCMVTLRGAHMYEFLDRFITVALPRVRDFRGVSGKAFDGRGNYNIGVKEQIIFPEIEYDKIDALRGMNISITTTAKTDDEAKALLAAFKFPFRN</sequence>
<organism>
    <name type="scientific">Janthinobacterium sp. (strain Marseille)</name>
    <name type="common">Minibacterium massiliensis</name>
    <dbReference type="NCBI Taxonomy" id="375286"/>
    <lineage>
        <taxon>Bacteria</taxon>
        <taxon>Pseudomonadati</taxon>
        <taxon>Pseudomonadota</taxon>
        <taxon>Betaproteobacteria</taxon>
        <taxon>Burkholderiales</taxon>
        <taxon>Oxalobacteraceae</taxon>
        <taxon>Janthinobacterium</taxon>
    </lineage>
</organism>
<accession>A6T3J2</accession>
<comment type="function">
    <text evidence="1">This is one of the proteins that bind and probably mediate the attachment of the 5S RNA into the large ribosomal subunit, where it forms part of the central protuberance. In the 70S ribosome it contacts protein S13 of the 30S subunit (bridge B1b), connecting the 2 subunits; this bridge is implicated in subunit movement. Contacts the P site tRNA; the 5S rRNA and some of its associated proteins might help stabilize positioning of ribosome-bound tRNAs.</text>
</comment>
<comment type="subunit">
    <text evidence="1">Part of the 50S ribosomal subunit; part of the 5S rRNA/L5/L18/L25 subcomplex. Contacts the 5S rRNA and the P site tRNA. Forms a bridge to the 30S subunit in the 70S ribosome.</text>
</comment>
<comment type="similarity">
    <text evidence="1">Belongs to the universal ribosomal protein uL5 family.</text>
</comment>
<proteinExistence type="inferred from homology"/>
<keyword id="KW-0687">Ribonucleoprotein</keyword>
<keyword id="KW-0689">Ribosomal protein</keyword>
<keyword id="KW-0694">RNA-binding</keyword>
<keyword id="KW-0699">rRNA-binding</keyword>
<keyword id="KW-0820">tRNA-binding</keyword>
<protein>
    <recommendedName>
        <fullName evidence="1">Large ribosomal subunit protein uL5</fullName>
    </recommendedName>
    <alternativeName>
        <fullName evidence="2">50S ribosomal protein L5</fullName>
    </alternativeName>
</protein>
<dbReference type="EMBL" id="CP000269">
    <property type="protein sequence ID" value="ABR88635.1"/>
    <property type="molecule type" value="Genomic_DNA"/>
</dbReference>
<dbReference type="RefSeq" id="WP_012081239.1">
    <property type="nucleotide sequence ID" value="NC_009659.1"/>
</dbReference>
<dbReference type="SMR" id="A6T3J2"/>
<dbReference type="STRING" id="375286.mma_3399"/>
<dbReference type="KEGG" id="mms:mma_3399"/>
<dbReference type="eggNOG" id="COG0094">
    <property type="taxonomic scope" value="Bacteria"/>
</dbReference>
<dbReference type="HOGENOM" id="CLU_061015_2_1_4"/>
<dbReference type="OrthoDB" id="9806626at2"/>
<dbReference type="Proteomes" id="UP000006388">
    <property type="component" value="Chromosome"/>
</dbReference>
<dbReference type="GO" id="GO:1990904">
    <property type="term" value="C:ribonucleoprotein complex"/>
    <property type="evidence" value="ECO:0007669"/>
    <property type="project" value="UniProtKB-KW"/>
</dbReference>
<dbReference type="GO" id="GO:0005840">
    <property type="term" value="C:ribosome"/>
    <property type="evidence" value="ECO:0007669"/>
    <property type="project" value="UniProtKB-KW"/>
</dbReference>
<dbReference type="GO" id="GO:0019843">
    <property type="term" value="F:rRNA binding"/>
    <property type="evidence" value="ECO:0007669"/>
    <property type="project" value="UniProtKB-UniRule"/>
</dbReference>
<dbReference type="GO" id="GO:0003735">
    <property type="term" value="F:structural constituent of ribosome"/>
    <property type="evidence" value="ECO:0007669"/>
    <property type="project" value="InterPro"/>
</dbReference>
<dbReference type="GO" id="GO:0000049">
    <property type="term" value="F:tRNA binding"/>
    <property type="evidence" value="ECO:0007669"/>
    <property type="project" value="UniProtKB-UniRule"/>
</dbReference>
<dbReference type="GO" id="GO:0006412">
    <property type="term" value="P:translation"/>
    <property type="evidence" value="ECO:0007669"/>
    <property type="project" value="UniProtKB-UniRule"/>
</dbReference>
<dbReference type="FunFam" id="3.30.1440.10:FF:000001">
    <property type="entry name" value="50S ribosomal protein L5"/>
    <property type="match status" value="1"/>
</dbReference>
<dbReference type="Gene3D" id="3.30.1440.10">
    <property type="match status" value="1"/>
</dbReference>
<dbReference type="HAMAP" id="MF_01333_B">
    <property type="entry name" value="Ribosomal_uL5_B"/>
    <property type="match status" value="1"/>
</dbReference>
<dbReference type="InterPro" id="IPR002132">
    <property type="entry name" value="Ribosomal_uL5"/>
</dbReference>
<dbReference type="InterPro" id="IPR020930">
    <property type="entry name" value="Ribosomal_uL5_bac-type"/>
</dbReference>
<dbReference type="InterPro" id="IPR031309">
    <property type="entry name" value="Ribosomal_uL5_C"/>
</dbReference>
<dbReference type="InterPro" id="IPR020929">
    <property type="entry name" value="Ribosomal_uL5_CS"/>
</dbReference>
<dbReference type="InterPro" id="IPR022803">
    <property type="entry name" value="Ribosomal_uL5_dom_sf"/>
</dbReference>
<dbReference type="InterPro" id="IPR031310">
    <property type="entry name" value="Ribosomal_uL5_N"/>
</dbReference>
<dbReference type="NCBIfam" id="NF000585">
    <property type="entry name" value="PRK00010.1"/>
    <property type="match status" value="1"/>
</dbReference>
<dbReference type="PANTHER" id="PTHR11994">
    <property type="entry name" value="60S RIBOSOMAL PROTEIN L11-RELATED"/>
    <property type="match status" value="1"/>
</dbReference>
<dbReference type="Pfam" id="PF00281">
    <property type="entry name" value="Ribosomal_L5"/>
    <property type="match status" value="1"/>
</dbReference>
<dbReference type="Pfam" id="PF00673">
    <property type="entry name" value="Ribosomal_L5_C"/>
    <property type="match status" value="1"/>
</dbReference>
<dbReference type="PIRSF" id="PIRSF002161">
    <property type="entry name" value="Ribosomal_L5"/>
    <property type="match status" value="1"/>
</dbReference>
<dbReference type="SUPFAM" id="SSF55282">
    <property type="entry name" value="RL5-like"/>
    <property type="match status" value="1"/>
</dbReference>
<dbReference type="PROSITE" id="PS00358">
    <property type="entry name" value="RIBOSOMAL_L5"/>
    <property type="match status" value="1"/>
</dbReference>
<gene>
    <name evidence="1" type="primary">rplE</name>
    <name type="ordered locus">mma_3399</name>
</gene>
<reference key="1">
    <citation type="journal article" date="2007" name="PLoS Genet.">
        <title>Genome analysis of Minibacterium massiliensis highlights the convergent evolution of water-living bacteria.</title>
        <authorList>
            <person name="Audic S."/>
            <person name="Robert C."/>
            <person name="Campagna B."/>
            <person name="Parinello H."/>
            <person name="Claverie J.-M."/>
            <person name="Raoult D."/>
            <person name="Drancourt M."/>
        </authorList>
    </citation>
    <scope>NUCLEOTIDE SEQUENCE [LARGE SCALE GENOMIC DNA]</scope>
    <source>
        <strain>Marseille</strain>
    </source>
</reference>
<name>RL5_JANMA</name>
<evidence type="ECO:0000255" key="1">
    <source>
        <dbReference type="HAMAP-Rule" id="MF_01333"/>
    </source>
</evidence>
<evidence type="ECO:0000305" key="2"/>
<feature type="chain" id="PRO_1000052750" description="Large ribosomal subunit protein uL5">
    <location>
        <begin position="1"/>
        <end position="179"/>
    </location>
</feature>